<accession>Q6DJ25</accession>
<proteinExistence type="evidence at transcript level"/>
<evidence type="ECO:0000250" key="1"/>
<evidence type="ECO:0000305" key="2"/>
<protein>
    <recommendedName>
        <fullName>Mediator of RNA polymerase II transcription subunit 10</fullName>
    </recommendedName>
    <alternativeName>
        <fullName>Mediator complex subunit 10</fullName>
    </alternativeName>
</protein>
<keyword id="KW-0010">Activator</keyword>
<keyword id="KW-0539">Nucleus</keyword>
<keyword id="KW-1185">Reference proteome</keyword>
<keyword id="KW-0804">Transcription</keyword>
<keyword id="KW-0805">Transcription regulation</keyword>
<sequence length="135" mass="15589">MAEKFDNLEEHLEKFVENIRQLGIIVSDFQPSSQAGLNQKLNFLVTGLQDIDKCRQQLHDITVPLEVFDYIDQGRNPQLYTKECLERALAKNEQVKGKIDTLKKFKSLLIQELSKVFPEDMAKYKAIRGEDHPPS</sequence>
<feature type="chain" id="PRO_0000303157" description="Mediator of RNA polymerase II transcription subunit 10">
    <location>
        <begin position="1"/>
        <end position="135"/>
    </location>
</feature>
<organism>
    <name type="scientific">Xenopus tropicalis</name>
    <name type="common">Western clawed frog</name>
    <name type="synonym">Silurana tropicalis</name>
    <dbReference type="NCBI Taxonomy" id="8364"/>
    <lineage>
        <taxon>Eukaryota</taxon>
        <taxon>Metazoa</taxon>
        <taxon>Chordata</taxon>
        <taxon>Craniata</taxon>
        <taxon>Vertebrata</taxon>
        <taxon>Euteleostomi</taxon>
        <taxon>Amphibia</taxon>
        <taxon>Batrachia</taxon>
        <taxon>Anura</taxon>
        <taxon>Pipoidea</taxon>
        <taxon>Pipidae</taxon>
        <taxon>Xenopodinae</taxon>
        <taxon>Xenopus</taxon>
        <taxon>Silurana</taxon>
    </lineage>
</organism>
<reference key="1">
    <citation type="submission" date="2004-06" db="EMBL/GenBank/DDBJ databases">
        <authorList>
            <consortium name="NIH - Xenopus Gene Collection (XGC) project"/>
        </authorList>
    </citation>
    <scope>NUCLEOTIDE SEQUENCE [LARGE SCALE MRNA]</scope>
</reference>
<dbReference type="EMBL" id="BC075360">
    <property type="protein sequence ID" value="AAH75360.1"/>
    <property type="molecule type" value="mRNA"/>
</dbReference>
<dbReference type="RefSeq" id="NP_001004914.1">
    <property type="nucleotide sequence ID" value="NM_001004914.1"/>
</dbReference>
<dbReference type="SMR" id="Q6DJ25"/>
<dbReference type="FunCoup" id="Q6DJ25">
    <property type="interactions" value="2592"/>
</dbReference>
<dbReference type="STRING" id="8364.ENSXETP00000014942"/>
<dbReference type="PaxDb" id="8364-ENSXETP00000055685"/>
<dbReference type="DNASU" id="448288"/>
<dbReference type="GeneID" id="448288"/>
<dbReference type="KEGG" id="xtr:448288"/>
<dbReference type="AGR" id="Xenbase:XB-GENE-950393"/>
<dbReference type="CTD" id="84246"/>
<dbReference type="Xenbase" id="XB-GENE-950393">
    <property type="gene designation" value="med10"/>
</dbReference>
<dbReference type="eggNOG" id="KOG3046">
    <property type="taxonomic scope" value="Eukaryota"/>
</dbReference>
<dbReference type="HOGENOM" id="CLU_096169_3_0_1"/>
<dbReference type="InParanoid" id="Q6DJ25"/>
<dbReference type="OMA" id="QYQRAKM"/>
<dbReference type="OrthoDB" id="337270at2759"/>
<dbReference type="PhylomeDB" id="Q6DJ25"/>
<dbReference type="TreeFam" id="TF315096"/>
<dbReference type="Proteomes" id="UP000008143">
    <property type="component" value="Chromosome 6"/>
</dbReference>
<dbReference type="Bgee" id="ENSXETG00000026404">
    <property type="expression patterns" value="Expressed in ovary and 13 other cell types or tissues"/>
</dbReference>
<dbReference type="GO" id="GO:0016592">
    <property type="term" value="C:mediator complex"/>
    <property type="evidence" value="ECO:0007669"/>
    <property type="project" value="InterPro"/>
</dbReference>
<dbReference type="GO" id="GO:0003712">
    <property type="term" value="F:transcription coregulator activity"/>
    <property type="evidence" value="ECO:0007669"/>
    <property type="project" value="InterPro"/>
</dbReference>
<dbReference type="GO" id="GO:0036302">
    <property type="term" value="P:atrioventricular canal development"/>
    <property type="evidence" value="ECO:0007669"/>
    <property type="project" value="Ensembl"/>
</dbReference>
<dbReference type="GO" id="GO:1905072">
    <property type="term" value="P:cardiac jelly development"/>
    <property type="evidence" value="ECO:0007669"/>
    <property type="project" value="Ensembl"/>
</dbReference>
<dbReference type="GO" id="GO:0006357">
    <property type="term" value="P:regulation of transcription by RNA polymerase II"/>
    <property type="evidence" value="ECO:0007669"/>
    <property type="project" value="InterPro"/>
</dbReference>
<dbReference type="InterPro" id="IPR019145">
    <property type="entry name" value="Mediator_Med10"/>
</dbReference>
<dbReference type="PANTHER" id="PTHR13345">
    <property type="entry name" value="MEDIATOR OF RNA POLYMERASE II TRANSCRIPTION SUBUNIT 10"/>
    <property type="match status" value="1"/>
</dbReference>
<dbReference type="PANTHER" id="PTHR13345:SF13">
    <property type="entry name" value="MEDIATOR OF RNA POLYMERASE II TRANSCRIPTION SUBUNIT 10"/>
    <property type="match status" value="1"/>
</dbReference>
<dbReference type="Pfam" id="PF09748">
    <property type="entry name" value="Med10"/>
    <property type="match status" value="1"/>
</dbReference>
<comment type="function">
    <text evidence="1">Component of the Mediator complex, a coactivator involved in the regulated transcription of nearly all RNA polymerase II-dependent genes. Mediator functions as a bridge to convey information from gene-specific regulatory proteins to the basal RNA polymerase II transcription machinery. Mediator is recruited to promoters by direct interactions with regulatory proteins and serves as a scaffold for the assembly of a functional preinitiation complex with RNA polymerase II and the general transcription factors (By similarity).</text>
</comment>
<comment type="subunit">
    <text evidence="1">Component of the Mediator complex.</text>
</comment>
<comment type="subcellular location">
    <subcellularLocation>
        <location evidence="2">Nucleus</location>
    </subcellularLocation>
</comment>
<comment type="similarity">
    <text evidence="2">Belongs to the Mediator complex subunit 10 family.</text>
</comment>
<gene>
    <name type="primary">med10</name>
</gene>
<name>MED10_XENTR</name>